<evidence type="ECO:0000250" key="1"/>
<evidence type="ECO:0000255" key="2"/>
<evidence type="ECO:0000255" key="3">
    <source>
        <dbReference type="PROSITE-ProRule" id="PRU00214"/>
    </source>
</evidence>
<evidence type="ECO:0000255" key="4">
    <source>
        <dbReference type="PROSITE-ProRule" id="PRU00444"/>
    </source>
</evidence>
<evidence type="ECO:0000255" key="5">
    <source>
        <dbReference type="PROSITE-ProRule" id="PRU00490"/>
    </source>
</evidence>
<evidence type="ECO:0000255" key="6">
    <source>
        <dbReference type="PROSITE-ProRule" id="PRU00772"/>
    </source>
</evidence>
<evidence type="ECO:0000255" key="7">
    <source>
        <dbReference type="PROSITE-ProRule" id="PRU01291"/>
    </source>
</evidence>
<evidence type="ECO:0000255" key="8">
    <source>
        <dbReference type="PROSITE-ProRule" id="PRU01294"/>
    </source>
</evidence>
<evidence type="ECO:0000255" key="9">
    <source>
        <dbReference type="PROSITE-ProRule" id="PRU01295"/>
    </source>
</evidence>
<evidence type="ECO:0000255" key="10">
    <source>
        <dbReference type="PROSITE-ProRule" id="PRU01296"/>
    </source>
</evidence>
<evidence type="ECO:0000255" key="11">
    <source>
        <dbReference type="PROSITE-ProRule" id="PRU01297"/>
    </source>
</evidence>
<evidence type="ECO:0000255" key="12">
    <source>
        <dbReference type="PROSITE-ProRule" id="PRU01307"/>
    </source>
</evidence>
<evidence type="ECO:0000255" key="13">
    <source>
        <dbReference type="PROSITE-ProRule" id="PRU01333"/>
    </source>
</evidence>
<evidence type="ECO:0000255" key="14">
    <source>
        <dbReference type="PROSITE-ProRule" id="PRU01334"/>
    </source>
</evidence>
<evidence type="ECO:0000255" key="15">
    <source>
        <dbReference type="PROSITE-ProRule" id="PRU01335"/>
    </source>
</evidence>
<evidence type="ECO:0000255" key="16">
    <source>
        <dbReference type="PROSITE-ProRule" id="PRU01336"/>
    </source>
</evidence>
<evidence type="ECO:0000255" key="17">
    <source>
        <dbReference type="PROSITE-ProRule" id="PRU01337"/>
    </source>
</evidence>
<evidence type="ECO:0000269" key="18">
    <source>
    </source>
</evidence>
<evidence type="ECO:0000269" key="19">
    <source>
    </source>
</evidence>
<evidence type="ECO:0000269" key="20">
    <source>
    </source>
</evidence>
<evidence type="ECO:0000269" key="21">
    <source>
    </source>
</evidence>
<evidence type="ECO:0000269" key="22">
    <source>
    </source>
</evidence>
<evidence type="ECO:0000269" key="23">
    <source>
    </source>
</evidence>
<evidence type="ECO:0000305" key="24"/>
<evidence type="ECO:0007829" key="25">
    <source>
        <dbReference type="PDB" id="2ZU2"/>
    </source>
</evidence>
<evidence type="ECO:0007829" key="26">
    <source>
        <dbReference type="PDB" id="3EWR"/>
    </source>
</evidence>
<name>R1A_CVH22</name>
<keyword id="KW-0002">3D-structure</keyword>
<keyword id="KW-1072">Activation of host autophagy by virus</keyword>
<keyword id="KW-1015">Disulfide bond</keyword>
<keyword id="KW-1035">Host cytoplasm</keyword>
<keyword id="KW-1043">Host membrane</keyword>
<keyword id="KW-0945">Host-virus interaction</keyword>
<keyword id="KW-0378">Hydrolase</keyword>
<keyword id="KW-1090">Inhibition of host innate immune response by virus</keyword>
<keyword id="KW-1092">Inhibition of host IRF3 by virus</keyword>
<keyword id="KW-1113">Inhibition of host RLR pathway by virus</keyword>
<keyword id="KW-0472">Membrane</keyword>
<keyword id="KW-0479">Metal-binding</keyword>
<keyword id="KW-1127">Modulation of host ubiquitin pathway by viral deubiquitinase</keyword>
<keyword id="KW-1130">Modulation of host ubiquitin pathway by virus</keyword>
<keyword id="KW-0645">Protease</keyword>
<keyword id="KW-1185">Reference proteome</keyword>
<keyword id="KW-0677">Repeat</keyword>
<keyword id="KW-0688">Ribosomal frameshifting</keyword>
<keyword id="KW-0694">RNA-binding</keyword>
<keyword id="KW-0788">Thiol protease</keyword>
<keyword id="KW-0812">Transmembrane</keyword>
<keyword id="KW-1133">Transmembrane helix</keyword>
<keyword id="KW-0833">Ubl conjugation pathway</keyword>
<keyword id="KW-0899">Viral immunoevasion</keyword>
<keyword id="KW-0862">Zinc</keyword>
<keyword id="KW-0863">Zinc-finger</keyword>
<dbReference type="EC" id="3.4.19.12"/>
<dbReference type="EC" id="3.4.22.-"/>
<dbReference type="EMBL" id="AF304460">
    <property type="protein sequence ID" value="AAG48590.1"/>
    <property type="molecule type" value="Genomic_RNA"/>
</dbReference>
<dbReference type="EMBL" id="X69721">
    <property type="protein sequence ID" value="CAA49377.1"/>
    <property type="molecule type" value="Genomic_RNA"/>
</dbReference>
<dbReference type="PIR" id="S28600">
    <property type="entry name" value="S28600"/>
</dbReference>
<dbReference type="RefSeq" id="NP_073550.1">
    <molecule id="P0C6U2-1"/>
    <property type="nucleotide sequence ID" value="NC_002645.1"/>
</dbReference>
<dbReference type="PDB" id="1P9S">
    <property type="method" value="X-ray"/>
    <property type="resolution" value="2.54 A"/>
    <property type="chains" value="A/B=2966-3265"/>
</dbReference>
<dbReference type="PDB" id="2ZU2">
    <property type="method" value="X-ray"/>
    <property type="resolution" value="1.80 A"/>
    <property type="chains" value="A/B=2966-3267"/>
</dbReference>
<dbReference type="PDB" id="3EWQ">
    <property type="method" value="X-ray"/>
    <property type="resolution" value="2.10 A"/>
    <property type="chains" value="A=1269-1436"/>
</dbReference>
<dbReference type="PDB" id="3EWR">
    <property type="method" value="X-ray"/>
    <property type="resolution" value="2.01 A"/>
    <property type="chains" value="A=1269-1436"/>
</dbReference>
<dbReference type="PDBsum" id="1P9S"/>
<dbReference type="PDBsum" id="2ZU2"/>
<dbReference type="PDBsum" id="3EWQ"/>
<dbReference type="PDBsum" id="3EWR"/>
<dbReference type="SASBDB" id="P0C6U2"/>
<dbReference type="SMR" id="P0C6U2"/>
<dbReference type="IntAct" id="P0C6U2">
    <property type="interactions" value="2"/>
</dbReference>
<dbReference type="MEROPS" id="C30.003"/>
<dbReference type="DNASU" id="918764"/>
<dbReference type="SABIO-RK" id="P0C6U2"/>
<dbReference type="EvolutionaryTrace" id="P0C6U2"/>
<dbReference type="Proteomes" id="UP000006716">
    <property type="component" value="Genome"/>
</dbReference>
<dbReference type="GO" id="GO:0033644">
    <property type="term" value="C:host cell membrane"/>
    <property type="evidence" value="ECO:0007669"/>
    <property type="project" value="UniProtKB-SubCell"/>
</dbReference>
<dbReference type="GO" id="GO:0044220">
    <property type="term" value="C:host cell perinuclear region of cytoplasm"/>
    <property type="evidence" value="ECO:0007669"/>
    <property type="project" value="UniProtKB-SubCell"/>
</dbReference>
<dbReference type="GO" id="GO:0016020">
    <property type="term" value="C:membrane"/>
    <property type="evidence" value="ECO:0007669"/>
    <property type="project" value="UniProtKB-KW"/>
</dbReference>
<dbReference type="GO" id="GO:0004843">
    <property type="term" value="F:cysteine-type deubiquitinase activity"/>
    <property type="evidence" value="ECO:0007669"/>
    <property type="project" value="UniProtKB-EC"/>
</dbReference>
<dbReference type="GO" id="GO:0004197">
    <property type="term" value="F:cysteine-type endopeptidase activity"/>
    <property type="evidence" value="ECO:0007669"/>
    <property type="project" value="InterPro"/>
</dbReference>
<dbReference type="GO" id="GO:0008242">
    <property type="term" value="F:omega peptidase activity"/>
    <property type="evidence" value="ECO:0007669"/>
    <property type="project" value="InterPro"/>
</dbReference>
<dbReference type="GO" id="GO:0003723">
    <property type="term" value="F:RNA binding"/>
    <property type="evidence" value="ECO:0007669"/>
    <property type="project" value="UniProtKB-KW"/>
</dbReference>
<dbReference type="GO" id="GO:0016740">
    <property type="term" value="F:transferase activity"/>
    <property type="evidence" value="ECO:0007669"/>
    <property type="project" value="InterPro"/>
</dbReference>
<dbReference type="GO" id="GO:0008270">
    <property type="term" value="F:zinc ion binding"/>
    <property type="evidence" value="ECO:0007669"/>
    <property type="project" value="UniProtKB-KW"/>
</dbReference>
<dbReference type="GO" id="GO:0006508">
    <property type="term" value="P:proteolysis"/>
    <property type="evidence" value="ECO:0007669"/>
    <property type="project" value="UniProtKB-KW"/>
</dbReference>
<dbReference type="GO" id="GO:0010506">
    <property type="term" value="P:regulation of autophagy"/>
    <property type="evidence" value="ECO:0007669"/>
    <property type="project" value="InterPro"/>
</dbReference>
<dbReference type="GO" id="GO:0039520">
    <property type="term" value="P:symbiont-mediated activation of host autophagy"/>
    <property type="evidence" value="ECO:0007669"/>
    <property type="project" value="UniProtKB-KW"/>
</dbReference>
<dbReference type="GO" id="GO:0039648">
    <property type="term" value="P:symbiont-mediated perturbation of host ubiquitin-like protein modification"/>
    <property type="evidence" value="ECO:0007669"/>
    <property type="project" value="UniProtKB-KW"/>
</dbReference>
<dbReference type="GO" id="GO:0039548">
    <property type="term" value="P:symbiont-mediated suppression of host cytoplasmic pattern recognition receptor signaling pathway via inhibition of IRF3 activity"/>
    <property type="evidence" value="ECO:0007669"/>
    <property type="project" value="UniProtKB-KW"/>
</dbReference>
<dbReference type="GO" id="GO:0019079">
    <property type="term" value="P:viral genome replication"/>
    <property type="evidence" value="ECO:0007669"/>
    <property type="project" value="InterPro"/>
</dbReference>
<dbReference type="GO" id="GO:0019082">
    <property type="term" value="P:viral protein processing"/>
    <property type="evidence" value="ECO:0007669"/>
    <property type="project" value="InterPro"/>
</dbReference>
<dbReference type="GO" id="GO:0075523">
    <property type="term" value="P:viral translational frameshifting"/>
    <property type="evidence" value="ECO:0007669"/>
    <property type="project" value="UniProtKB-KW"/>
</dbReference>
<dbReference type="CDD" id="cd21901">
    <property type="entry name" value="alpha_betaCoV_Nsp10"/>
    <property type="match status" value="1"/>
</dbReference>
<dbReference type="CDD" id="cd21558">
    <property type="entry name" value="alphaCoV-Nsp6"/>
    <property type="match status" value="1"/>
</dbReference>
<dbReference type="CDD" id="cd21514">
    <property type="entry name" value="alphaCoV_Nsp2_HCoV-229E-like"/>
    <property type="match status" value="1"/>
</dbReference>
<dbReference type="CDD" id="cd21665">
    <property type="entry name" value="alphaCoV_Nsp5_Mpro"/>
    <property type="match status" value="1"/>
</dbReference>
<dbReference type="CDD" id="cd21826">
    <property type="entry name" value="alphaCoV_Nsp7"/>
    <property type="match status" value="1"/>
</dbReference>
<dbReference type="CDD" id="cd21830">
    <property type="entry name" value="alphaCoV_Nsp8"/>
    <property type="match status" value="1"/>
</dbReference>
<dbReference type="CDD" id="cd21897">
    <property type="entry name" value="alphaCoV_Nsp9"/>
    <property type="match status" value="1"/>
</dbReference>
<dbReference type="CDD" id="cd21731">
    <property type="entry name" value="alphaCoV_PLPro"/>
    <property type="match status" value="1"/>
</dbReference>
<dbReference type="CDD" id="cd21473">
    <property type="entry name" value="cv_Nsp4_TM"/>
    <property type="match status" value="1"/>
</dbReference>
<dbReference type="CDD" id="cd21557">
    <property type="entry name" value="Macro_X_Nsp3-like"/>
    <property type="match status" value="1"/>
</dbReference>
<dbReference type="CDD" id="cd21875">
    <property type="entry name" value="PEDV-like_alphaCoV_Nsp1"/>
    <property type="match status" value="1"/>
</dbReference>
<dbReference type="CDD" id="cd21712">
    <property type="entry name" value="TM_Y_alphaCoV_Nsp3_C"/>
    <property type="match status" value="1"/>
</dbReference>
<dbReference type="Gene3D" id="1.10.8.1190">
    <property type="match status" value="2"/>
</dbReference>
<dbReference type="Gene3D" id="6.10.140.2090">
    <property type="match status" value="1"/>
</dbReference>
<dbReference type="Gene3D" id="1.10.150.420">
    <property type="entry name" value="Coronavirus nonstructural protein 4 C-terminus"/>
    <property type="match status" value="1"/>
</dbReference>
<dbReference type="Gene3D" id="3.40.220.10">
    <property type="entry name" value="Leucine Aminopeptidase, subunit E, domain 1"/>
    <property type="match status" value="1"/>
</dbReference>
<dbReference type="Gene3D" id="1.10.1840.10">
    <property type="entry name" value="main proteinase (3clpro) structure, domain 3"/>
    <property type="match status" value="1"/>
</dbReference>
<dbReference type="Gene3D" id="1.10.8.370">
    <property type="entry name" value="nsp7 replicase"/>
    <property type="match status" value="1"/>
</dbReference>
<dbReference type="Gene3D" id="3.30.70.3540">
    <property type="entry name" value="Nsp8 replicase, head domain"/>
    <property type="match status" value="1"/>
</dbReference>
<dbReference type="Gene3D" id="2.40.10.250">
    <property type="entry name" value="Replicase NSP9"/>
    <property type="match status" value="1"/>
</dbReference>
<dbReference type="Gene3D" id="2.30.30.1000">
    <property type="entry name" value="Replicase polyprotein 1a"/>
    <property type="match status" value="1"/>
</dbReference>
<dbReference type="Gene3D" id="2.40.10.10">
    <property type="entry name" value="Trypsin-like serine proteases"/>
    <property type="match status" value="2"/>
</dbReference>
<dbReference type="InterPro" id="IPR038634">
    <property type="entry name" value="A-CoV_nsp1_sf"/>
</dbReference>
<dbReference type="InterPro" id="IPR046443">
    <property type="entry name" value="a/bCoV_NSP1_glob"/>
</dbReference>
<dbReference type="InterPro" id="IPR023298">
    <property type="entry name" value="ATPase_P-typ_TM_dom_sf"/>
</dbReference>
<dbReference type="InterPro" id="IPR043613">
    <property type="entry name" value="CoV_NSP2_C"/>
</dbReference>
<dbReference type="InterPro" id="IPR047573">
    <property type="entry name" value="CoV_NSP2_M"/>
</dbReference>
<dbReference type="InterPro" id="IPR049894">
    <property type="entry name" value="COV_NSP3_3ECTO"/>
</dbReference>
<dbReference type="InterPro" id="IPR043611">
    <property type="entry name" value="CoV_NSP3_C"/>
</dbReference>
<dbReference type="InterPro" id="IPR047566">
    <property type="entry name" value="CoV_NSP3_Y"/>
</dbReference>
<dbReference type="InterPro" id="IPR032505">
    <property type="entry name" value="CoV_NSP4_C"/>
</dbReference>
<dbReference type="InterPro" id="IPR043612">
    <property type="entry name" value="CoV_NSP4_N"/>
</dbReference>
<dbReference type="InterPro" id="IPR002589">
    <property type="entry name" value="Macro_dom"/>
</dbReference>
<dbReference type="InterPro" id="IPR043472">
    <property type="entry name" value="Macro_dom-like"/>
</dbReference>
<dbReference type="InterPro" id="IPR044371">
    <property type="entry name" value="Macro_X_NSP3-like"/>
</dbReference>
<dbReference type="InterPro" id="IPR036333">
    <property type="entry name" value="NSP10_sf_CoV"/>
</dbReference>
<dbReference type="InterPro" id="IPR044385">
    <property type="entry name" value="NSP2_HCoV-229E-like"/>
</dbReference>
<dbReference type="InterPro" id="IPR043615">
    <property type="entry name" value="NSP2_N_CoV"/>
</dbReference>
<dbReference type="InterPro" id="IPR044357">
    <property type="entry name" value="NSP3_Ubl1_dom_CoV"/>
</dbReference>
<dbReference type="InterPro" id="IPR044353">
    <property type="entry name" value="Nsp3_Ubl2_dom_CoV"/>
</dbReference>
<dbReference type="InterPro" id="IPR038123">
    <property type="entry name" value="NSP4_C_sf_CoV"/>
</dbReference>
<dbReference type="InterPro" id="IPR044309">
    <property type="entry name" value="NSP5_Mpro_alphaCoV"/>
</dbReference>
<dbReference type="InterPro" id="IPR044369">
    <property type="entry name" value="NSP6_alphaCoV"/>
</dbReference>
<dbReference type="InterPro" id="IPR043610">
    <property type="entry name" value="NSP6_CoV"/>
</dbReference>
<dbReference type="InterPro" id="IPR014828">
    <property type="entry name" value="NSP7_CoV"/>
</dbReference>
<dbReference type="InterPro" id="IPR037204">
    <property type="entry name" value="NSP7_sf_CoV"/>
</dbReference>
<dbReference type="InterPro" id="IPR014829">
    <property type="entry name" value="NSP8_CoV"/>
</dbReference>
<dbReference type="InterPro" id="IPR037230">
    <property type="entry name" value="NSP8_sf_CoV"/>
</dbReference>
<dbReference type="InterPro" id="IPR014822">
    <property type="entry name" value="NSP9_CoV"/>
</dbReference>
<dbReference type="InterPro" id="IPR036499">
    <property type="entry name" value="NSP9_sf_CoV"/>
</dbReference>
<dbReference type="InterPro" id="IPR011050">
    <property type="entry name" value="Pectin_lyase_fold/virulence"/>
</dbReference>
<dbReference type="InterPro" id="IPR013016">
    <property type="entry name" value="Peptidase_C16_CoV"/>
</dbReference>
<dbReference type="InterPro" id="IPR008740">
    <property type="entry name" value="Peptidase_C30_CoV"/>
</dbReference>
<dbReference type="InterPro" id="IPR043477">
    <property type="entry name" value="Peptidase_C30_dom3_CoV"/>
</dbReference>
<dbReference type="InterPro" id="IPR009003">
    <property type="entry name" value="Peptidase_S1_PA"/>
</dbReference>
<dbReference type="InterPro" id="IPR043504">
    <property type="entry name" value="Peptidase_S1_PA_chymotrypsin"/>
</dbReference>
<dbReference type="InterPro" id="IPR043178">
    <property type="entry name" value="PLpro_thumb_sf_CoV"/>
</dbReference>
<dbReference type="InterPro" id="IPR018995">
    <property type="entry name" value="RNA_synth_NSP10_CoV"/>
</dbReference>
<dbReference type="Pfam" id="PF09401">
    <property type="entry name" value="CoV_NSP10"/>
    <property type="match status" value="1"/>
</dbReference>
<dbReference type="Pfam" id="PF19212">
    <property type="entry name" value="CoV_NSP2_C"/>
    <property type="match status" value="2"/>
</dbReference>
<dbReference type="Pfam" id="PF19211">
    <property type="entry name" value="CoV_NSP2_N"/>
    <property type="match status" value="1"/>
</dbReference>
<dbReference type="Pfam" id="PF19218">
    <property type="entry name" value="CoV_NSP3_C"/>
    <property type="match status" value="1"/>
</dbReference>
<dbReference type="Pfam" id="PF16348">
    <property type="entry name" value="CoV_NSP4_C"/>
    <property type="match status" value="1"/>
</dbReference>
<dbReference type="Pfam" id="PF19217">
    <property type="entry name" value="CoV_NSP4_N"/>
    <property type="match status" value="1"/>
</dbReference>
<dbReference type="Pfam" id="PF19213">
    <property type="entry name" value="CoV_NSP6"/>
    <property type="match status" value="1"/>
</dbReference>
<dbReference type="Pfam" id="PF08716">
    <property type="entry name" value="CoV_NSP7"/>
    <property type="match status" value="1"/>
</dbReference>
<dbReference type="Pfam" id="PF08717">
    <property type="entry name" value="CoV_NSP8"/>
    <property type="match status" value="1"/>
</dbReference>
<dbReference type="Pfam" id="PF08710">
    <property type="entry name" value="CoV_NSP9"/>
    <property type="match status" value="1"/>
</dbReference>
<dbReference type="Pfam" id="PF08715">
    <property type="entry name" value="CoV_peptidase"/>
    <property type="match status" value="2"/>
</dbReference>
<dbReference type="Pfam" id="PF01661">
    <property type="entry name" value="Macro"/>
    <property type="match status" value="1"/>
</dbReference>
<dbReference type="Pfam" id="PF05409">
    <property type="entry name" value="Peptidase_C30"/>
    <property type="match status" value="1"/>
</dbReference>
<dbReference type="SMART" id="SM00506">
    <property type="entry name" value="A1pp"/>
    <property type="match status" value="1"/>
</dbReference>
<dbReference type="SUPFAM" id="SSF81665">
    <property type="entry name" value="Calcium ATPase, transmembrane domain M"/>
    <property type="match status" value="1"/>
</dbReference>
<dbReference type="SUPFAM" id="SSF144246">
    <property type="entry name" value="Coronavirus NSP10-like"/>
    <property type="match status" value="1"/>
</dbReference>
<dbReference type="SUPFAM" id="SSF140367">
    <property type="entry name" value="Coronavirus NSP7-like"/>
    <property type="match status" value="1"/>
</dbReference>
<dbReference type="SUPFAM" id="SSF143076">
    <property type="entry name" value="Coronavirus NSP8-like"/>
    <property type="match status" value="1"/>
</dbReference>
<dbReference type="SUPFAM" id="SSF52949">
    <property type="entry name" value="Macro domain-like"/>
    <property type="match status" value="1"/>
</dbReference>
<dbReference type="SUPFAM" id="SSF51126">
    <property type="entry name" value="Pectin lyase-like"/>
    <property type="match status" value="1"/>
</dbReference>
<dbReference type="SUPFAM" id="SSF101816">
    <property type="entry name" value="Replicase NSP9"/>
    <property type="match status" value="1"/>
</dbReference>
<dbReference type="SUPFAM" id="SSF50494">
    <property type="entry name" value="Trypsin-like serine proteases"/>
    <property type="match status" value="1"/>
</dbReference>
<dbReference type="PROSITE" id="PS51993">
    <property type="entry name" value="COV_3ECTO"/>
    <property type="match status" value="1"/>
</dbReference>
<dbReference type="PROSITE" id="PS51952">
    <property type="entry name" value="COV_EXON_MTASE_COACT"/>
    <property type="match status" value="1"/>
</dbReference>
<dbReference type="PROSITE" id="PS51962">
    <property type="entry name" value="COV_NSP1"/>
    <property type="match status" value="1"/>
</dbReference>
<dbReference type="PROSITE" id="PS51991">
    <property type="entry name" value="COV_NSP2_C"/>
    <property type="match status" value="1"/>
</dbReference>
<dbReference type="PROSITE" id="PS51990">
    <property type="entry name" value="COV_NSP2_M"/>
    <property type="match status" value="1"/>
</dbReference>
<dbReference type="PROSITE" id="PS51989">
    <property type="entry name" value="COV_NSP2_N"/>
    <property type="match status" value="1"/>
</dbReference>
<dbReference type="PROSITE" id="PS51992">
    <property type="entry name" value="COV_NSP3_Y"/>
    <property type="match status" value="1"/>
</dbReference>
<dbReference type="PROSITE" id="PS51943">
    <property type="entry name" value="COV_NSP3A_UBL"/>
    <property type="match status" value="1"/>
</dbReference>
<dbReference type="PROSITE" id="PS51944">
    <property type="entry name" value="COV_NSP3D_UBL"/>
    <property type="match status" value="1"/>
</dbReference>
<dbReference type="PROSITE" id="PS51946">
    <property type="entry name" value="COV_NSP4C"/>
    <property type="match status" value="1"/>
</dbReference>
<dbReference type="PROSITE" id="PS51949">
    <property type="entry name" value="COV_NSP7"/>
    <property type="match status" value="1"/>
</dbReference>
<dbReference type="PROSITE" id="PS51950">
    <property type="entry name" value="COV_NSP8"/>
    <property type="match status" value="1"/>
</dbReference>
<dbReference type="PROSITE" id="PS51951">
    <property type="entry name" value="COV_NSP9_SSRNA_BD"/>
    <property type="match status" value="1"/>
</dbReference>
<dbReference type="PROSITE" id="PS51442">
    <property type="entry name" value="M_PRO"/>
    <property type="match status" value="1"/>
</dbReference>
<dbReference type="PROSITE" id="PS51154">
    <property type="entry name" value="MACRO"/>
    <property type="match status" value="1"/>
</dbReference>
<dbReference type="PROSITE" id="PS51124">
    <property type="entry name" value="PEPTIDASE_C16"/>
    <property type="match status" value="2"/>
</dbReference>
<accession>P0C6U2</accession>
<accession>Q05002</accession>
<sequence length="4085" mass="454215">MACNRVTLAVASDSEISANGCSTIAQAVRRYSEAASNGFRACRFVSLDLQDCIVGIADDTYVMGLHGNQTLFCNIMKFSDRPFMLHGWLVFSNSNYLLEEFDVVFGKRGGGNVTYTDQYLCGADGKPVMSEDLWQFVDHFGENEEIIINGHTYVCAWLTKRKPLDYKRQNNLAIEEIEYVHGDALHTLRNGSVLEMAKEVKTSSKVVLSDALDKLYKVFGSPVMTNGSNILEAFTKPVFISALVQCTCGTKSWSVGDWTGFKSSCCNVISNKLCVVPGNVKPGDAVITTQQAGAGIKYFCGMTLKFVANIEGVSVWRVIALQSVDCFVASSTFVEEEHVNRMDTFCFNVRNSVTDECRLAMLGAEMTSNVRRQVASGVIDISTGWFDVYDDIFAESKPWFVRKAEDIFGPCWSALASALKQLKVTTGELVRFVKSICNSAVAVVGGTIQILASVPEKFLNAFDVFVTAIQTVFDCAVETCTIAGKAFDKVFDYVLLDNALVKLVTTKLKGVRERGLNKVKYATVVVGSTEEVKSSRVERSTAVLTIANNYSKLFDEGYTVVIGDVAYFVSDGYFRLMASPNSVLTTAVYKPLFAFNVNVMGTRPEKFPTTVTCENLESAVLFVNDKITEFQLDYSIDVIDNEIIVKPNISLCVPLYVRDYVDKWDDFCRQYSNESWFEDDYRAFISVLDITDAAVKAAESKAFVDTIVPPCPSILKVIDGGKIWNGVIKNVNSVRDWLKSLKLNLTQQGLLGTCAKRFKRWLGILLEAYNAFLDTVVSTVKIGGLTFKTYAFDKPYIVIRDIVCKVENKTEAEWIELFPHNDRIKSFSTFESAYMPIADPTHFDIEEVELLDAEFVEPGCGGILAVIDEHVFYKKDGVYYPSNGTNILPVAFTKAAGGKVSFSDDVEVKDIEPVYRVKLCFEFEDEKLVDVCEKAIGKKIKHEGDWDSFCKTIQSALSVVSCYVNLPTYYIYDEEGGNDLSLPVMISEWPLSVQQAQQEATLPDIAEDVVDQVEEVNSIFDIETVDVKHDVSPFEMPFEELNGLKILKQLDNNCWVNSVMLQIQLTGILDGDYAMQFFKMGRVAKMIERCYTAEQCIRGAMGDVGLCMYRLLKDLHTGFMVMDYKCSCTSGRLEESGAVLFCTPTKKAFPYGTCLNCNAPRMCTIRQLQGTIIFVQQKPEPVNPVSFVVKPVCSSIFRGAVSCGHYQTNIYSQNLCVDGFGVNKIQPWTNDALNTICIKDADYNAKVEISVTPIKNTVDTTPKEEFVVKEKLNAFLVHDNVAFYQGDVDTVVNGVDFDFIVNAANENLAHGGGLAKALDVYTKGKLQRLSKEHIGLAGKVKVGTGVMVECDSLRIFNVVGPRKGKHERDLLIKAYNTINNEQGTPLTPILSCGIFGIKLETSLEVLLDVCNTKEVKVFVYTDTEVCKVKDFVSGLVNVQKVEQPKIEPKPVSVIKVAPKPYRVDGKFSYFTEDLLCVADDKPIVLFTDSMLTLDDRGLALDNALSGVLSAAIKDCVDINKAIPSGNLIKFDIGSVVVYMCVVPSEKDKHLDNNVQRCTRKLNRLMCDIVCTIPADYILPLVLSSLTCNVSFVGELKAAEAKVITIKVTEDGVNVHDVTVTTDKSFEQQVGVIADKDKDLSGAVPSDLNTSELLTKAIDVDWVEFYGFKDAVTFATVDHSAFAYESAVVNGIRVLKTSDNNCWVNAVCIALQYSKPHFISQGLDAAWNKFVLGDVEIFVAFVYYVARLMKGDKGDAEDTLTKLSKYLANEAQVQLEHYSSCVECDAKFKNSVASINSAIVCASVKRDGVQVGYCVHGIKYYSRVRSVRGRAIIVSVEQLEPCAQSRLLSGVAYTAFSGPVDKGHYTVYDTAKKSMYDGDRFVKHDLSLLSVTSVVMVGGYVAPVNTVKPKPVINQLDEKAQKFFDFGDFLIHNFVIFFTWLLSMFTLCKTAVTTGDVKIMAKAPQRTGVVLKRSLKYNLKASAAVLKSKWWLLAKFTKLLLLIYTLYSVVLLCVRFGPFNFCSETVNGYAKSNFVKDDYCDGSLGCKMCLFGYQELSQFSHLDVVWKHITDPLFSNMQPFIVMVLLLIFGDNYLRCFLLYFVAQMISTVGVFLGYKETNWFLHFIPFDVICDELLVTVIVIKVISFVRHVLFGCENPDCIACSKSARLKRFPVNTIVNGVQRSFYVNANGGSKFCKKHRFFCVDCDSYGYGSTFITPEVSRELGNITKTNVQPTGPAYVMIDKVEFENGFYRLYSCETFWRYNFDITESKYSCKEVFKNCNVLDDFIVFNNNGTNVTQVKNASVYFSQLLCRPIKLVDSELLSTLSVDFNGVLHKAYIDVLRNSFGKDLNANMSLAECKRALGLSISDHEFTSAISNAHRCDVLLSDLSFNNFVSSYAKPEEKLSAYDLACCMRAGAKVVNANVLTKDQTPIVWHAKDFNSLSAEGRKYIVKTSKAKGLTFLLTINENQAVTQIPATSIVAKQGAGDAGHSLTWLWLLCGLVCLIQFYLCFFMPYFMYDIVSSFEGYDFKYIENGQLKNFEAPLKCVRNVFENFEDWHYAKFGFTPLNKQSCPIVVGVSEIVNTVAGIPSNVYLVGKTLIFTLQAAFGNAGVCYDIFGVTTPEKCIFTSACTRLEGLGGNNVYCYNTALMEGSLPYSSIQANAYYKYDNGNFIKLPEVIAQGFGFRTVRTIATKYCRVGECVESNAGVCFGFDKWFVNDGRVANGYVCGTGLWNLVFNILSMFSSSFSVAAMSGQILLNCALGAFAIFCCFLVTKFRRMFGDLSVGVCTVVVAVLLNNVSYIVTQNLVTMIAYAILYFFATRSLRYAWIWCAAYLIAYISFAPWWLCAWYFLAMLTGLLPSLLKLKVSTNLFEGDKFVGTFESAAAGTFVIDMRSYEKLANSISPEKLKSYAASYNRYKYYSGNANEADYRCACYAYLAKAMLDFSRDHNDILYTPPTVSYGSTLQAGLRKMAQPSGFVEKCVVRVCYGNTVLNGLWLGDIVYCPRHVIASNTTSAIDYDHEYSIMRLHNFSIISGTAFLGVVGATMHGVTLKIKVSQTNMHTPRHSFRTLKSGEGFNILACYDGCAQGVFGVNMRTNWTIRGSFINGACGSPGYNLKNGEVEFVYMHQIELGSGSHVGSSFDGVMYGGFEDQPNLQVESANQMLTVNVVAFLYAAILNGCTWWLKGEKLFVEHYNEWAQANGFTAMNGEDAFSILAAKTGVCVERLLHAIQVLNNGFGGKQILGYSSLNDEFSINEVVKQMFGVNLQSGKTTSMFKSISLFAGFFVMFWAELFVYTTTIWVNPGFLTPFMILLVALSLCLTFVVKHKVLFLQVFLLPSIIVAAIQNCAWDYHVTKVLAEKFDYNVSVMQMDIQGFVNIFICLFVALLHTWRFAKERCTHWCTYLFSLIAVLYTALYSYDYVSLLVMLLCAISNEWYIGAIIFRICRFGVAFLPVEYVSYFDGVKTVLLFYMLLGFVSCMYYGLLYWINRFCKCTLGVYDFCVSPAEFKYMVANGLNAPNGPFDALFLSFKLMGIGGPRTIKVSTVQSKLTDLKCTNVVLMGILSNMNIASNSKEWAYCVEMHNKINLCDDPETAQELLLALLAFFLSKHSDFGLGDLVDSYFENDSILQSVASSFVGMPSFVAYETARQEYENAVANGSSPQIIKQLKKAMNVAKAEFDRESSVQKKINRMAEQAAAAMYKEARAVNRKSKVVSAMHSLLFGMLRRLDMSSVDTILNMARNGVVPLSVIPATSAARLVVVVPDHDSFVKMMVDGFVHYAGVVWTLQEVKDNDGKNVHLKDVTKENQEILVWPLILTCERVVKLQNNEIMPGKMKVKATKGEGDGGITSEGNALYNNEGGRAFMYAYVTTKPGMKYVKWEHDSGVVTVELEPPCRFVIDTPTGPQIKYLYFVKNLNNLRRGAVLGYIGATVRLQAGKQTEFVSNSHLLTHCSFAVDPAAAYLDAVKQGAKPVGNCVKMLTNGSGSGQAITCTIDSNTTQDTYGGASVCIYCRAHVAHPTMDGFCQYKGKWVQVPIGTNDPIRFCLENTVCKVCGCWLNHGCTCDRTAIQSFDNSYLNESGALVPLD</sequence>
<organismHost>
    <name type="scientific">Homo sapiens</name>
    <name type="common">Human</name>
    <dbReference type="NCBI Taxonomy" id="9606"/>
</organismHost>
<protein>
    <recommendedName>
        <fullName>Replicase polyprotein 1a</fullName>
        <shortName>pp1a</shortName>
    </recommendedName>
    <alternativeName>
        <fullName>ORF1a polyprotein</fullName>
    </alternativeName>
    <component>
        <recommendedName>
            <fullName>Non-structural protein 1</fullName>
            <shortName>nsp1</shortName>
        </recommendedName>
        <alternativeName>
            <fullName>p9</fullName>
        </alternativeName>
    </component>
    <component>
        <recommendedName>
            <fullName>Non-structural protein 2</fullName>
            <shortName>nsp2</shortName>
        </recommendedName>
        <alternativeName>
            <fullName>p87</fullName>
        </alternativeName>
    </component>
    <component>
        <recommendedName>
            <fullName>Non-structural protein 3</fullName>
            <shortName>nsp3</shortName>
            <ecNumber>3.4.19.12</ecNumber>
            <ecNumber>3.4.22.-</ecNumber>
        </recommendedName>
        <alternativeName>
            <fullName>PL1-PRO/PL2-PRO</fullName>
        </alternativeName>
        <alternativeName>
            <fullName>PLP1/PLP2</fullName>
        </alternativeName>
        <alternativeName>
            <fullName>Papain-like proteinases 1/2</fullName>
        </alternativeName>
        <alternativeName>
            <fullName>p195</fullName>
        </alternativeName>
    </component>
    <component>
        <recommendedName>
            <fullName>Non-structural protein 4</fullName>
            <shortName>nsp4</shortName>
        </recommendedName>
        <alternativeName>
            <fullName>Peptide HD2</fullName>
        </alternativeName>
    </component>
    <component>
        <recommendedName>
            <fullName>3C-like proteinase</fullName>
            <shortName>3CL-PRO</shortName>
            <shortName>3CLp</shortName>
            <ecNumber>3.4.22.-</ecNumber>
        </recommendedName>
        <alternativeName>
            <fullName>M-PRO</fullName>
        </alternativeName>
        <alternativeName>
            <fullName>nsp5</fullName>
        </alternativeName>
        <alternativeName>
            <fullName>p34</fullName>
        </alternativeName>
    </component>
    <component>
        <recommendedName>
            <fullName>Non-structural protein 6</fullName>
            <shortName>nsp6</shortName>
        </recommendedName>
    </component>
    <component>
        <recommendedName>
            <fullName>Non-structural protein 7</fullName>
            <shortName>nsp7</shortName>
        </recommendedName>
        <alternativeName>
            <fullName>p5</fullName>
        </alternativeName>
    </component>
    <component>
        <recommendedName>
            <fullName>Non-structural protein 8</fullName>
            <shortName>nsp8</shortName>
        </recommendedName>
        <alternativeName>
            <fullName>p23</fullName>
        </alternativeName>
    </component>
    <component>
        <recommendedName>
            <fullName>Non-structural protein 9</fullName>
            <shortName>nsp9</shortName>
        </recommendedName>
        <alternativeName>
            <fullName>p12</fullName>
        </alternativeName>
    </component>
    <component>
        <recommendedName>
            <fullName>Non-structural protein 10</fullName>
            <shortName>nsp10</shortName>
        </recommendedName>
        <alternativeName>
            <fullName>Growth factor-like peptide</fullName>
            <shortName>GFL</shortName>
        </alternativeName>
        <alternativeName>
            <fullName>p16</fullName>
        </alternativeName>
    </component>
    <component>
        <recommendedName>
            <fullName>Non-structural protein 11</fullName>
            <shortName>nsp11</shortName>
        </recommendedName>
    </component>
</protein>
<proteinExistence type="evidence at protein level"/>
<feature type="chain" id="PRO_0000338182" description="Replicase polyprotein 1a">
    <location>
        <begin position="1"/>
        <end position="4085"/>
    </location>
</feature>
<feature type="chain" id="PRO_0000338183" description="Non-structural protein 1">
    <location>
        <begin position="1"/>
        <end position="111"/>
    </location>
</feature>
<feature type="chain" id="PRO_0000338184" description="Non-structural protein 2">
    <location>
        <begin position="112"/>
        <end position="897"/>
    </location>
</feature>
<feature type="chain" id="PRO_0000338185" description="Non-structural protein 3">
    <location>
        <begin position="898"/>
        <end position="2484"/>
    </location>
</feature>
<feature type="chain" id="PRO_0000338186" description="Non-structural protein 4">
    <location>
        <begin position="2485"/>
        <end position="2965"/>
    </location>
</feature>
<feature type="chain" id="PRO_0000338187" description="3C-like proteinase">
    <location>
        <begin position="2966"/>
        <end position="3267"/>
    </location>
</feature>
<feature type="chain" id="PRO_0000338188" description="Non-structural protein 6">
    <location>
        <begin position="3268"/>
        <end position="3546"/>
    </location>
</feature>
<feature type="chain" id="PRO_0000338189" description="Non-structural protein 7">
    <location>
        <begin position="3547"/>
        <end position="3629"/>
    </location>
</feature>
<feature type="chain" id="PRO_0000338190" description="Non-structural protein 8">
    <location>
        <begin position="3630"/>
        <end position="3824"/>
    </location>
</feature>
<feature type="chain" id="PRO_0000338191" description="Non-structural protein 9">
    <location>
        <begin position="3825"/>
        <end position="3933"/>
    </location>
</feature>
<feature type="chain" id="PRO_0000338192" description="Non-structural protein 10">
    <location>
        <begin position="3934"/>
        <end position="4068"/>
    </location>
</feature>
<feature type="chain" id="PRO_0000338193" description="Non-structural protein 11" evidence="2">
    <location>
        <begin position="4069"/>
        <end position="4085"/>
    </location>
</feature>
<feature type="transmembrane region" description="Helical" evidence="2">
    <location>
        <begin position="1998"/>
        <end position="2018"/>
    </location>
</feature>
<feature type="transmembrane region" description="Helical" evidence="2">
    <location>
        <begin position="2068"/>
        <end position="2088"/>
    </location>
</feature>
<feature type="transmembrane region" description="Helical" evidence="2">
    <location>
        <begin position="2095"/>
        <end position="2115"/>
    </location>
</feature>
<feature type="transmembrane region" description="Helical" evidence="2">
    <location>
        <begin position="2491"/>
        <end position="2511"/>
    </location>
</feature>
<feature type="transmembrane region" description="Helical" evidence="2">
    <location>
        <begin position="2731"/>
        <end position="2751"/>
    </location>
</feature>
<feature type="transmembrane region" description="Helical" evidence="2">
    <location>
        <begin position="2755"/>
        <end position="2775"/>
    </location>
</feature>
<feature type="transmembrane region" description="Helical" evidence="2">
    <location>
        <begin position="2782"/>
        <end position="2802"/>
    </location>
</feature>
<feature type="transmembrane region" description="Helical" evidence="2">
    <location>
        <begin position="2809"/>
        <end position="2829"/>
    </location>
</feature>
<feature type="transmembrane region" description="Helical" evidence="2">
    <location>
        <begin position="2834"/>
        <end position="2854"/>
    </location>
</feature>
<feature type="transmembrane region" description="Helical" evidence="2">
    <location>
        <begin position="3281"/>
        <end position="3301"/>
    </location>
</feature>
<feature type="transmembrane region" description="Helical" evidence="2">
    <location>
        <begin position="3304"/>
        <end position="3324"/>
    </location>
</feature>
<feature type="transmembrane region" description="Helical" evidence="2">
    <location>
        <begin position="3328"/>
        <end position="3348"/>
    </location>
</feature>
<feature type="transmembrane region" description="Helical" evidence="2">
    <location>
        <begin position="3367"/>
        <end position="3387"/>
    </location>
</feature>
<feature type="transmembrane region" description="Helical" evidence="2">
    <location>
        <begin position="3401"/>
        <end position="3421"/>
    </location>
</feature>
<feature type="transmembrane region" description="Helical" evidence="2">
    <location>
        <begin position="3422"/>
        <end position="3442"/>
    </location>
</feature>
<feature type="transmembrane region" description="Helical" evidence="2">
    <location>
        <begin position="3467"/>
        <end position="3487"/>
    </location>
</feature>
<feature type="domain" description="CoV Nsp1 globular" evidence="12">
    <location>
        <begin position="2"/>
        <end position="109"/>
    </location>
</feature>
<feature type="domain" description="CoV Nsp2 N-terminal" evidence="13">
    <location>
        <begin position="113"/>
        <end position="359"/>
    </location>
</feature>
<feature type="domain" description="CoV Nsp2 middle" evidence="14">
    <location>
        <begin position="389"/>
        <end position="775"/>
    </location>
</feature>
<feature type="domain" description="CoV Nsp2 C-terminal" evidence="15">
    <location>
        <begin position="773"/>
        <end position="897"/>
    </location>
</feature>
<feature type="domain" description="Ubiquitin-like 1" evidence="3">
    <location>
        <begin position="898"/>
        <end position="993"/>
    </location>
</feature>
<feature type="domain" description="Peptidase C16 1" evidence="4">
    <location>
        <begin position="1016"/>
        <end position="1268"/>
    </location>
</feature>
<feature type="domain" description="Macro" evidence="5">
    <location>
        <begin position="1269"/>
        <end position="1436"/>
    </location>
</feature>
<feature type="domain" description="Ubiquitin-like 2" evidence="3">
    <location>
        <begin position="1600"/>
        <end position="1655"/>
    </location>
</feature>
<feature type="domain" description="Peptidase C16 2" evidence="4">
    <location>
        <begin position="1663"/>
        <end position="1914"/>
    </location>
</feature>
<feature type="domain" description="3Ecto" evidence="17">
    <location>
        <begin position="2005"/>
        <end position="2070"/>
    </location>
</feature>
<feature type="domain" description="CoV Nsp3 Y" evidence="16">
    <location>
        <begin position="2144"/>
        <end position="2483"/>
    </location>
</feature>
<feature type="domain" description="Nsp4C" evidence="7">
    <location>
        <begin position="2870"/>
        <end position="2965"/>
    </location>
</feature>
<feature type="domain" description="Peptidase C30" evidence="6">
    <location>
        <begin position="2966"/>
        <end position="3267"/>
    </location>
</feature>
<feature type="domain" description="RdRp Nsp7 cofactor" evidence="8">
    <location>
        <begin position="3547"/>
        <end position="3629"/>
    </location>
</feature>
<feature type="domain" description="RdRp Nsp8 cofactor" evidence="9">
    <location>
        <begin position="3630"/>
        <end position="3824"/>
    </location>
</feature>
<feature type="domain" description="Nsp9 ssRNA-binding" evidence="10">
    <location>
        <begin position="3825"/>
        <end position="3933"/>
    </location>
</feature>
<feature type="domain" description="ExoN/MTase coactivator" evidence="11">
    <location>
        <begin position="3934"/>
        <end position="4072"/>
    </location>
</feature>
<feature type="zinc finger region" description="C4-type 1; degenerate" evidence="4">
    <location>
        <begin position="1126"/>
        <end position="1157"/>
    </location>
</feature>
<feature type="zinc finger region" description="C4-type 2; atypical" evidence="4">
    <location>
        <begin position="1780"/>
        <end position="1815"/>
    </location>
</feature>
<feature type="zinc finger region" evidence="1">
    <location>
        <begin position="4007"/>
        <end position="4023"/>
    </location>
</feature>
<feature type="zinc finger region" evidence="1">
    <location>
        <begin position="4049"/>
        <end position="4062"/>
    </location>
</feature>
<feature type="region of interest" description="C4" evidence="13">
    <location>
        <begin position="246"/>
        <end position="266"/>
    </location>
</feature>
<feature type="region of interest" description="HD1">
    <location>
        <begin position="1925"/>
        <end position="2115"/>
    </location>
</feature>
<feature type="region of interest" description="Y1" evidence="16">
    <location>
        <begin position="2144"/>
        <end position="2234"/>
    </location>
</feature>
<feature type="region of interest" description="ZF1" evidence="16">
    <location>
        <begin position="2148"/>
        <end position="2161"/>
    </location>
</feature>
<feature type="region of interest" description="ZF2" evidence="16">
    <location>
        <begin position="2194"/>
        <end position="2204"/>
    </location>
</feature>
<feature type="region of interest" description="CoV-Y" evidence="16">
    <location>
        <begin position="2235"/>
        <end position="2483"/>
    </location>
</feature>
<feature type="region of interest" description="Y2" evidence="16">
    <location>
        <begin position="2235"/>
        <end position="2324"/>
    </location>
</feature>
<feature type="region of interest" description="Y3" evidence="16">
    <location>
        <begin position="2325"/>
        <end position="2381"/>
    </location>
</feature>
<feature type="region of interest" description="Y4" evidence="16">
    <location>
        <begin position="2382"/>
        <end position="2483"/>
    </location>
</feature>
<feature type="region of interest" description="HD2">
    <location>
        <begin position="2491"/>
        <end position="2854"/>
    </location>
</feature>
<feature type="region of interest" description="HD3">
    <location>
        <begin position="3281"/>
        <end position="3487"/>
    </location>
</feature>
<feature type="active site" description="For PL1-PRO activity" evidence="4">
    <location>
        <position position="1054"/>
    </location>
</feature>
<feature type="active site" description="For PL1-PRO activity" evidence="4">
    <location>
        <position position="1205"/>
    </location>
</feature>
<feature type="active site" description="For PL1-PRO activity" evidence="4">
    <location>
        <position position="1218"/>
    </location>
</feature>
<feature type="active site" description="For PL2-PRO activity" evidence="4">
    <location>
        <position position="1701"/>
    </location>
</feature>
<feature type="active site" description="For PL2-PRO activity" evidence="4">
    <location>
        <position position="1863"/>
    </location>
</feature>
<feature type="active site" description="For PL2-PRO activity" evidence="4">
    <location>
        <position position="1868"/>
    </location>
</feature>
<feature type="active site" description="For 3CL-PRO activity">
    <location>
        <position position="3006"/>
    </location>
</feature>
<feature type="active site" description="For 3CL-PRO activity">
    <location>
        <position position="3109"/>
    </location>
</feature>
<feature type="binding site" evidence="13">
    <location>
        <position position="246"/>
    </location>
    <ligand>
        <name>Zn(2+)</name>
        <dbReference type="ChEBI" id="CHEBI:29105"/>
        <label>1</label>
    </ligand>
</feature>
<feature type="binding site" evidence="13">
    <location>
        <position position="248"/>
    </location>
    <ligand>
        <name>Zn(2+)</name>
        <dbReference type="ChEBI" id="CHEBI:29105"/>
        <label>1</label>
    </ligand>
</feature>
<feature type="binding site" evidence="13">
    <location>
        <position position="265"/>
    </location>
    <ligand>
        <name>Zn(2+)</name>
        <dbReference type="ChEBI" id="CHEBI:29105"/>
        <label>1</label>
    </ligand>
</feature>
<feature type="binding site" evidence="13">
    <location>
        <position position="266"/>
    </location>
    <ligand>
        <name>Zn(2+)</name>
        <dbReference type="ChEBI" id="CHEBI:29105"/>
        <label>1</label>
    </ligand>
</feature>
<feature type="binding site" evidence="4">
    <location>
        <position position="1780"/>
    </location>
    <ligand>
        <name>Zn(2+)</name>
        <dbReference type="ChEBI" id="CHEBI:29105"/>
        <label>2</label>
    </ligand>
</feature>
<feature type="binding site" evidence="4">
    <location>
        <position position="1783"/>
    </location>
    <ligand>
        <name>Zn(2+)</name>
        <dbReference type="ChEBI" id="CHEBI:29105"/>
        <label>2</label>
    </ligand>
</feature>
<feature type="binding site" evidence="4">
    <location>
        <position position="1813"/>
    </location>
    <ligand>
        <name>Zn(2+)</name>
        <dbReference type="ChEBI" id="CHEBI:29105"/>
        <label>2</label>
    </ligand>
</feature>
<feature type="binding site" evidence="4">
    <location>
        <position position="1815"/>
    </location>
    <ligand>
        <name>Zn(2+)</name>
        <dbReference type="ChEBI" id="CHEBI:29105"/>
        <label>2</label>
    </ligand>
</feature>
<feature type="binding site" evidence="16">
    <location>
        <position position="2148"/>
    </location>
    <ligand>
        <name>Zn(2+)</name>
        <dbReference type="ChEBI" id="CHEBI:29105"/>
        <label>3</label>
    </ligand>
</feature>
<feature type="binding site" evidence="16">
    <location>
        <position position="2153"/>
    </location>
    <ligand>
        <name>Zn(2+)</name>
        <dbReference type="ChEBI" id="CHEBI:29105"/>
        <label>3</label>
    </ligand>
</feature>
<feature type="binding site" evidence="16">
    <location>
        <position position="2158"/>
    </location>
    <ligand>
        <name>Zn(2+)</name>
        <dbReference type="ChEBI" id="CHEBI:29105"/>
        <label>3</label>
    </ligand>
</feature>
<feature type="binding site" evidence="16">
    <location>
        <position position="2161"/>
    </location>
    <ligand>
        <name>Zn(2+)</name>
        <dbReference type="ChEBI" id="CHEBI:29105"/>
        <label>3</label>
    </ligand>
</feature>
<feature type="binding site" evidence="16">
    <location>
        <position position="2194"/>
    </location>
    <ligand>
        <name>Zn(2+)</name>
        <dbReference type="ChEBI" id="CHEBI:29105"/>
        <label>4</label>
    </ligand>
</feature>
<feature type="binding site" evidence="16">
    <location>
        <position position="2197"/>
    </location>
    <ligand>
        <name>Zn(2+)</name>
        <dbReference type="ChEBI" id="CHEBI:29105"/>
        <label>4</label>
    </ligand>
</feature>
<feature type="binding site" evidence="16">
    <location>
        <position position="2201"/>
    </location>
    <ligand>
        <name>Zn(2+)</name>
        <dbReference type="ChEBI" id="CHEBI:29105"/>
        <label>4</label>
    </ligand>
</feature>
<feature type="binding site" evidence="16">
    <location>
        <position position="2204"/>
    </location>
    <ligand>
        <name>Zn(2+)</name>
        <dbReference type="ChEBI" id="CHEBI:29105"/>
        <label>4</label>
    </ligand>
</feature>
<feature type="binding site" evidence="11">
    <location>
        <position position="4007"/>
    </location>
    <ligand>
        <name>Zn(2+)</name>
        <dbReference type="ChEBI" id="CHEBI:29105"/>
        <label>5</label>
    </ligand>
</feature>
<feature type="binding site" evidence="11">
    <location>
        <position position="4010"/>
    </location>
    <ligand>
        <name>Zn(2+)</name>
        <dbReference type="ChEBI" id="CHEBI:29105"/>
        <label>5</label>
    </ligand>
</feature>
<feature type="binding site" evidence="11">
    <location>
        <position position="4016"/>
    </location>
    <ligand>
        <name>Zn(2+)</name>
        <dbReference type="ChEBI" id="CHEBI:29105"/>
        <label>5</label>
    </ligand>
</feature>
<feature type="binding site" evidence="11">
    <location>
        <position position="4023"/>
    </location>
    <ligand>
        <name>Zn(2+)</name>
        <dbReference type="ChEBI" id="CHEBI:29105"/>
        <label>5</label>
    </ligand>
</feature>
<feature type="binding site" evidence="11">
    <location>
        <position position="4049"/>
    </location>
    <ligand>
        <name>Zn(2+)</name>
        <dbReference type="ChEBI" id="CHEBI:29105"/>
        <label>6</label>
    </ligand>
</feature>
<feature type="binding site" evidence="11">
    <location>
        <position position="4052"/>
    </location>
    <ligand>
        <name>Zn(2+)</name>
        <dbReference type="ChEBI" id="CHEBI:29105"/>
        <label>6</label>
    </ligand>
</feature>
<feature type="binding site" evidence="11">
    <location>
        <position position="4060"/>
    </location>
    <ligand>
        <name>Zn(2+)</name>
        <dbReference type="ChEBI" id="CHEBI:29105"/>
        <label>6</label>
    </ligand>
</feature>
<feature type="binding site" evidence="11">
    <location>
        <position position="4062"/>
    </location>
    <ligand>
        <name>Zn(2+)</name>
        <dbReference type="ChEBI" id="CHEBI:29105"/>
        <label>6</label>
    </ligand>
</feature>
<feature type="site" description="Cleavage; by PL1-PRO">
    <location>
        <begin position="111"/>
        <end position="112"/>
    </location>
</feature>
<feature type="site" description="Cleavage; by PL1-PRO">
    <location>
        <begin position="897"/>
        <end position="898"/>
    </location>
</feature>
<feature type="site" description="Cleavage; by PL2-PRO">
    <location>
        <begin position="2484"/>
        <end position="2485"/>
    </location>
</feature>
<feature type="site" description="Cleavage; by 3CL-PRO">
    <location>
        <begin position="2965"/>
        <end position="2966"/>
    </location>
</feature>
<feature type="site" description="Cleavage; by 3CL-PRO">
    <location>
        <begin position="3267"/>
        <end position="3268"/>
    </location>
</feature>
<feature type="site" description="Cleavage; by 3CL-PRO">
    <location>
        <begin position="3546"/>
        <end position="3547"/>
    </location>
</feature>
<feature type="site" description="Cleavage; by 3CL-PRO">
    <location>
        <begin position="3629"/>
        <end position="3630"/>
    </location>
</feature>
<feature type="site" description="Cleavage; by 3CL-PRO">
    <location>
        <begin position="3824"/>
        <end position="3825"/>
    </location>
</feature>
<feature type="site" description="Cleavage; by 3CL-PRO">
    <location>
        <begin position="3933"/>
        <end position="3934"/>
    </location>
</feature>
<feature type="site" description="Cleavage; by 3CL-PRO">
    <location>
        <begin position="4068"/>
        <end position="4069"/>
    </location>
</feature>
<feature type="disulfide bond" evidence="17">
    <location>
        <begin position="2021"/>
        <end position="2048"/>
    </location>
</feature>
<feature type="disulfide bond" evidence="17">
    <location>
        <begin position="2039"/>
        <end position="2045"/>
    </location>
</feature>
<feature type="mutagenesis site" description="Complete loss of PL1-PRO activity." evidence="18">
    <original>K</original>
    <variation>E</variation>
    <location>
        <position position="1048"/>
    </location>
</feature>
<feature type="mutagenesis site" description="Complete loss of PL1-PRO activity." evidence="19">
    <original>C</original>
    <variation>A</variation>
    <variation>G</variation>
    <variation>S</variation>
    <location>
        <position position="1054"/>
    </location>
</feature>
<feature type="mutagenesis site" description="Complete loss of PL1-PRO activity." evidence="18">
    <original>G</original>
    <variation>A</variation>
    <location>
        <position position="1099"/>
    </location>
</feature>
<feature type="mutagenesis site" description="No effect." evidence="18">
    <original>G</original>
    <variation>P</variation>
    <location>
        <position position="1099"/>
    </location>
</feature>
<feature type="mutagenesis site" description="No effect." evidence="18">
    <original>G</original>
    <variation>A</variation>
    <variation>S</variation>
    <location>
        <position position="1102"/>
    </location>
</feature>
<feature type="mutagenesis site" description="Complete loss of PL1-PRO activity." evidence="18">
    <original>C</original>
    <variation>D</variation>
    <variation>H</variation>
    <location>
        <position position="1126"/>
    </location>
</feature>
<feature type="mutagenesis site" description="Complete loss of PL1-PRO activity." evidence="18">
    <original>C</original>
    <variation>A</variation>
    <variation>D</variation>
    <variation>P</variation>
    <location>
        <position position="1128"/>
    </location>
</feature>
<feature type="mutagenesis site" description="Complete loss of PL1-PRO activity." evidence="18">
    <original>C</original>
    <variation>A</variation>
    <variation>H</variation>
    <variation>D</variation>
    <location>
        <position position="1154"/>
    </location>
</feature>
<feature type="mutagenesis site" description="Complete loss of PL1-PRO activity." evidence="18">
    <location>
        <position position="1155"/>
    </location>
</feature>
<feature type="mutagenesis site" description="Complete loss of PL1-PRO activity." evidence="18">
    <original>C</original>
    <variation>A</variation>
    <variation>D</variation>
    <variation>H</variation>
    <variation>P</variation>
    <location>
        <position position="1157"/>
    </location>
</feature>
<feature type="mutagenesis site" description="No effect." evidence="18">
    <original>C</original>
    <variation>A</variation>
    <variation>D</variation>
    <location>
        <position position="1163"/>
    </location>
</feature>
<feature type="mutagenesis site" description="Complete loss of PL1-PRO activity." evidence="18">
    <original>V</original>
    <variation>H</variation>
    <variation>P</variation>
    <location>
        <position position="1175"/>
    </location>
</feature>
<feature type="mutagenesis site" description="No effect." evidence="18">
    <original>V</original>
    <variation>N</variation>
    <variation>T</variation>
    <location>
        <position position="1175"/>
    </location>
</feature>
<feature type="mutagenesis site" description="Complete loss of PL1-PRO activity." evidence="18">
    <original>C</original>
    <variation>A</variation>
    <location>
        <position position="1203"/>
    </location>
</feature>
<feature type="mutagenesis site" description="No effect." evidence="18">
    <original>C</original>
    <variation>D</variation>
    <location>
        <position position="1203"/>
    </location>
</feature>
<feature type="mutagenesis site" description="No effect." evidence="18">
    <original>D</original>
    <variation>A</variation>
    <variation>E</variation>
    <variation>H</variation>
    <variation>K</variation>
    <variation>N</variation>
    <variation>Q</variation>
    <location>
        <position position="1218"/>
    </location>
</feature>
<feature type="mutagenesis site" description="Complete loss of PL2-PRO activity." evidence="19">
    <original>W</original>
    <variation>L</variation>
    <location>
        <position position="1702"/>
    </location>
</feature>
<feature type="mutagenesis site" description="Complete loss of 3CL-PRO activity." evidence="22">
    <original>H</original>
    <variation>G</variation>
    <variation>S</variation>
    <variation>T</variation>
    <variation>Y</variation>
    <location>
        <position position="3006"/>
    </location>
</feature>
<feature type="mutagenesis site" description="No loss of 3CL-PRO activity." evidence="22">
    <original>H</original>
    <variation>G</variation>
    <variation>T</variation>
    <location>
        <position position="3028"/>
    </location>
</feature>
<feature type="mutagenesis site" description="Increase of 3CL-PRO activity." evidence="20 22">
    <original>N</original>
    <variation>A</variation>
    <variation>D</variation>
    <variation>E</variation>
    <variation>Q</variation>
    <location>
        <position position="3029"/>
    </location>
</feature>
<feature type="mutagenesis site" description="No loss of 3CL-PRO activity." evidence="20 22">
    <original>N</original>
    <variation>G</variation>
    <location>
        <position position="3029"/>
    </location>
</feature>
<feature type="mutagenesis site" description="95% loss of 3CL-PRO activity." evidence="20 22">
    <original>N</original>
    <variation>P</variation>
    <location>
        <position position="3029"/>
    </location>
</feature>
<feature type="mutagenesis site" description="No loss of 3CL-PRO activity." evidence="22">
    <original>E</original>
    <variation>H</variation>
    <location>
        <position position="3074"/>
    </location>
</feature>
<feature type="mutagenesis site" description="Complete loss of 3CL-PRO activity." evidence="22">
    <original>T</original>
    <variation>D</variation>
    <location>
        <position position="3099"/>
    </location>
</feature>
<feature type="mutagenesis site" description="Complete loss of 3CL-PRO activity." evidence="22">
    <original>C</original>
    <variation>P</variation>
    <variation>S</variation>
    <variation>V</variation>
    <location>
        <position position="3109"/>
    </location>
</feature>
<feature type="mutagenesis site" description="Complete loss of 3CL-PRO activity." evidence="22">
    <original>H</original>
    <variation>S</variation>
    <location>
        <position position="3127"/>
    </location>
</feature>
<feature type="mutagenesis site" description="67% loss of 3CL-PRO activity." evidence="22">
    <original>H</original>
    <variation>A</variation>
    <location>
        <position position="3136"/>
    </location>
</feature>
<feature type="mutagenesis site" description="77% loss of 3CL-PRO activity." evidence="22">
    <original>H</original>
    <variation>S</variation>
    <location>
        <position position="3136"/>
    </location>
</feature>
<feature type="mutagenesis site" description="93% loss of 3CL-PRO activity." evidence="22">
    <original>H</original>
    <variation>T</variation>
    <location>
        <position position="3136"/>
    </location>
</feature>
<feature type="mutagenesis site" description="No loss of 3CL-PRO activity." evidence="22">
    <original>Q</original>
    <variation>A</variation>
    <location>
        <position position="3267"/>
    </location>
</feature>
<feature type="sequence conflict" description="In Ref. 1." evidence="24" ref="1">
    <original>A</original>
    <variation>Q</variation>
    <location>
        <position position="1982"/>
    </location>
</feature>
<feature type="sequence conflict" description="In Ref. 1." evidence="24" ref="1">
    <original>F</original>
    <variation>S</variation>
    <location>
        <position position="4042"/>
    </location>
</feature>
<feature type="strand" evidence="26">
    <location>
        <begin position="1275"/>
        <end position="1278"/>
    </location>
</feature>
<feature type="strand" evidence="26">
    <location>
        <begin position="1281"/>
        <end position="1285"/>
    </location>
</feature>
<feature type="helix" evidence="26">
    <location>
        <begin position="1288"/>
        <end position="1294"/>
    </location>
</feature>
<feature type="strand" evidence="26">
    <location>
        <begin position="1298"/>
        <end position="1304"/>
    </location>
</feature>
<feature type="helix" evidence="26">
    <location>
        <begin position="1313"/>
        <end position="1321"/>
    </location>
</feature>
<feature type="turn" evidence="26">
    <location>
        <begin position="1322"/>
        <end position="1324"/>
    </location>
</feature>
<feature type="helix" evidence="26">
    <location>
        <begin position="1325"/>
        <end position="1333"/>
    </location>
</feature>
<feature type="strand" evidence="26">
    <location>
        <begin position="1345"/>
        <end position="1350"/>
    </location>
</feature>
<feature type="strand" evidence="26">
    <location>
        <begin position="1353"/>
        <end position="1359"/>
    </location>
</feature>
<feature type="helix" evidence="26">
    <location>
        <begin position="1367"/>
        <end position="1380"/>
    </location>
</feature>
<feature type="strand" evidence="26">
    <location>
        <begin position="1381"/>
        <end position="1383"/>
    </location>
</feature>
<feature type="strand" evidence="26">
    <location>
        <begin position="1385"/>
        <end position="1387"/>
    </location>
</feature>
<feature type="helix" evidence="26">
    <location>
        <begin position="1399"/>
        <end position="1409"/>
    </location>
</feature>
<feature type="strand" evidence="26">
    <location>
        <begin position="1415"/>
        <end position="1419"/>
    </location>
</feature>
<feature type="helix" evidence="26">
    <location>
        <begin position="1422"/>
        <end position="1433"/>
    </location>
</feature>
<feature type="helix" evidence="25">
    <location>
        <begin position="2976"/>
        <end position="2979"/>
    </location>
</feature>
<feature type="strand" evidence="25">
    <location>
        <begin position="2982"/>
        <end position="2987"/>
    </location>
</feature>
<feature type="strand" evidence="25">
    <location>
        <begin position="2990"/>
        <end position="2997"/>
    </location>
</feature>
<feature type="strand" evidence="25">
    <location>
        <begin position="3000"/>
        <end position="3004"/>
    </location>
</feature>
<feature type="helix" evidence="25">
    <location>
        <begin position="3005"/>
        <end position="3008"/>
    </location>
</feature>
<feature type="helix" evidence="25">
    <location>
        <begin position="3018"/>
        <end position="3024"/>
    </location>
</feature>
<feature type="helix" evidence="25">
    <location>
        <begin position="3027"/>
        <end position="3029"/>
    </location>
</feature>
<feature type="strand" evidence="25">
    <location>
        <begin position="3030"/>
        <end position="3034"/>
    </location>
</feature>
<feature type="strand" evidence="25">
    <location>
        <begin position="3037"/>
        <end position="3039"/>
    </location>
</feature>
<feature type="strand" evidence="25">
    <location>
        <begin position="3041"/>
        <end position="3047"/>
    </location>
</feature>
<feature type="strand" evidence="25">
    <location>
        <begin position="3050"/>
        <end position="3057"/>
    </location>
</feature>
<feature type="strand" evidence="25">
    <location>
        <begin position="3064"/>
        <end position="3067"/>
    </location>
</feature>
<feature type="strand" evidence="25">
    <location>
        <begin position="3075"/>
        <end position="3093"/>
    </location>
</feature>
<feature type="strand" evidence="25">
    <location>
        <begin position="3112"/>
        <end position="3117"/>
    </location>
</feature>
<feature type="strand" evidence="25">
    <location>
        <begin position="3120"/>
        <end position="3130"/>
    </location>
</feature>
<feature type="strand" evidence="25">
    <location>
        <begin position="3136"/>
        <end position="3139"/>
    </location>
</feature>
<feature type="helix" evidence="25">
    <location>
        <begin position="3146"/>
        <end position="3148"/>
    </location>
</feature>
<feature type="strand" evidence="25">
    <location>
        <begin position="3151"/>
        <end position="3154"/>
    </location>
</feature>
<feature type="helix" evidence="25">
    <location>
        <begin position="3165"/>
        <end position="3177"/>
    </location>
</feature>
<feature type="helix" evidence="25">
    <location>
        <begin position="3191"/>
        <end position="3199"/>
    </location>
</feature>
<feature type="turn" evidence="25">
    <location>
        <begin position="3200"/>
        <end position="3202"/>
    </location>
</feature>
<feature type="helix" evidence="25">
    <location>
        <begin position="3209"/>
        <end position="3212"/>
    </location>
</feature>
<feature type="helix" evidence="25">
    <location>
        <begin position="3213"/>
        <end position="3219"/>
    </location>
</feature>
<feature type="helix" evidence="25">
    <location>
        <begin position="3223"/>
        <end position="3233"/>
    </location>
</feature>
<feature type="strand" evidence="25">
    <location>
        <begin position="3245"/>
        <end position="3247"/>
    </location>
</feature>
<feature type="helix" evidence="25">
    <location>
        <begin position="3254"/>
        <end position="3262"/>
    </location>
</feature>
<comment type="function">
    <text evidence="1">The papain-like proteinase 1 (PLP1) and papain-like proteinase 2 (PLP2) are responsible for the cleavages located at the N-terminus of the replicase polyprotein. In addition, PLP2 possesses a deubiquitinating/deISGylating activity and processes both 'Lys-48'- and 'Lys-63'-linked polyubiquitin chains from cellular substrates. PLP2 also antagonizes innate immune induction of type I interferon by blocking the nuclear translocation of host IRF-3 (By similarity).</text>
</comment>
<comment type="function">
    <molecule>3C-like proteinase</molecule>
    <text evidence="6">Responsible for the majority of cleavages as it cleaves the C-terminus of replicase polyprotein at 11 sites. Recognizes substrates containing the core sequence [ILMVF]-Q-|-[SGACN]. Inhibited by the substrate-analog Cbz-Val-Asn-Ser-Thr-Leu-Gln-CMK. Also contains an ADP-ribose-1''-phosphate (ADRP)-binding function (By similarity).</text>
</comment>
<comment type="function">
    <text evidence="1">Nsp7-nsp8 hexadecamer may possibly confer processivity to the polymerase, maybe by binding to dsRNA or by producing primers utilized by the latter.</text>
</comment>
<comment type="function">
    <text evidence="1">Nsp9 is a ssRNA-binding protein.</text>
</comment>
<comment type="catalytic activity">
    <reaction>
        <text>Thiol-dependent hydrolysis of ester, thioester, amide, peptide and isopeptide bonds formed by the C-terminal Gly of ubiquitin (a 76-residue protein attached to proteins as an intracellular targeting signal).</text>
        <dbReference type="EC" id="3.4.19.12"/>
    </reaction>
</comment>
<comment type="subunit">
    <text evidence="1">3CL-PRO exists as monomer and homodimer. Eight copies of nsp7 and eight copies of nsp8 assemble to form a heterohexadecamer. Nsp9 is a dimer. Nsp10 forms a dodecamer (By similarity).</text>
</comment>
<comment type="subcellular location">
    <molecule>Non-structural protein 3</molecule>
    <subcellularLocation>
        <location evidence="24">Host membrane</location>
        <topology evidence="24">Multi-pass membrane protein</topology>
    </subcellularLocation>
</comment>
<comment type="subcellular location">
    <molecule>Non-structural protein 4</molecule>
    <subcellularLocation>
        <location evidence="24">Host membrane</location>
        <topology evidence="24">Multi-pass membrane protein</topology>
    </subcellularLocation>
</comment>
<comment type="subcellular location">
    <molecule>Non-structural protein 6</molecule>
    <subcellularLocation>
        <location evidence="24">Host membrane</location>
        <topology evidence="24">Multi-pass membrane protein</topology>
    </subcellularLocation>
</comment>
<comment type="subcellular location">
    <molecule>Non-structural protein 7</molecule>
    <subcellularLocation>
        <location evidence="1">Host cytoplasm</location>
        <location evidence="1">Host perinuclear region</location>
    </subcellularLocation>
    <text evidence="1">nsp7, nsp8, nsp9 and nsp10 are localized in cytoplasmic foci, largely perinuclear. Late in infection, they merge into confluent complexes (By similarity).</text>
</comment>
<comment type="subcellular location">
    <molecule>Non-structural protein 8</molecule>
    <subcellularLocation>
        <location evidence="1">Host cytoplasm</location>
        <location evidence="1">Host perinuclear region</location>
    </subcellularLocation>
    <text evidence="1">nsp7, nsp8, nsp9 and nsp10 are localized in cytoplasmic foci, largely perinuclear. Late in infection, they merge into confluent complexes (By similarity).</text>
</comment>
<comment type="subcellular location">
    <molecule>Non-structural protein 9</molecule>
    <subcellularLocation>
        <location evidence="1">Host cytoplasm</location>
        <location evidence="1">Host perinuclear region</location>
    </subcellularLocation>
    <text evidence="1">nsp7, nsp8, nsp9 and nsp10 are localized in cytoplasmic foci, largely perinuclear. Late in infection, they merge into confluent complexes (By similarity).</text>
</comment>
<comment type="subcellular location">
    <molecule>Non-structural protein 10</molecule>
    <subcellularLocation>
        <location evidence="1">Host cytoplasm</location>
        <location evidence="1">Host perinuclear region</location>
    </subcellularLocation>
    <text evidence="1">nsp7, nsp8, nsp9 and nsp10 are localized in cytoplasmic foci, largely perinuclear. Late in infection, they merge into confluent complexes (By similarity).</text>
</comment>
<comment type="alternative products">
    <event type="ribosomal frameshifting"/>
    <isoform>
        <id>P0C6U2-1</id>
        <name>Replicase polyprotein 1a</name>
        <name>pp1a</name>
        <name>ORF1a polyprotein</name>
        <sequence type="displayed"/>
    </isoform>
    <isoform>
        <id>P0C6X1-1</id>
        <name>Replicase polyprotein 1ab</name>
        <name>pp1ab</name>
        <sequence type="external"/>
    </isoform>
</comment>
<comment type="domain">
    <text>The hydrophobic domains (HD) could mediate the membrane association of the replication complex and thereby alter the architecture of the host cell membrane.</text>
</comment>
<comment type="PTM">
    <text evidence="19 21 23">Specific enzymatic cleavages in vivo by its own proteases yield mature proteins. 3CL-PRO and PL-PRO proteinases are autocatalytically processed.</text>
</comment>
<comment type="miscellaneous">
    <molecule>Isoform Replicase polyprotein 1a</molecule>
    <text>Produced by conventional translation.</text>
</comment>
<comment type="similarity">
    <text evidence="24">Belongs to the coronaviruses polyprotein 1ab family.</text>
</comment>
<comment type="online information" name="Protein Spotlight">
    <link uri="https://www.proteinspotlight.org/back_issues/077"/>
    <text>Proteic grace - Issue 77 of December 2006</text>
</comment>
<gene>
    <name type="ORF">1a</name>
</gene>
<reference key="1">
    <citation type="journal article" date="2001" name="J. Gen. Virol.">
        <title>Infectious RNA transcribed in vitro from a cDNA copy of the human coronavirus genome cloned in vaccinia virus.</title>
        <authorList>
            <person name="Thiel V."/>
            <person name="Herold J."/>
            <person name="Schelle B."/>
            <person name="Siddell S.G."/>
        </authorList>
    </citation>
    <scope>NUCLEOTIDE SEQUENCE [GENOMIC RNA]</scope>
</reference>
<reference key="2">
    <citation type="journal article" date="1993" name="Virology">
        <title>Nucleotide sequence of the human coronavirus 229E RNA polymerase locus.</title>
        <authorList>
            <person name="Herold J."/>
            <person name="Raabe T."/>
            <person name="Schelle-Prinz B."/>
            <person name="Siddell S.G."/>
        </authorList>
    </citation>
    <scope>NUCLEOTIDE SEQUENCE [GENOMIC RNA]</scope>
</reference>
<reference key="3">
    <citation type="journal article" date="1997" name="J. Virol.">
        <title>Biosynthesis, purification, and characterization of the human coronavirus 229E 3C-like proteinase.</title>
        <authorList>
            <person name="Ziebuhr J."/>
            <person name="Heusipp G."/>
            <person name="Siddell S.G."/>
        </authorList>
    </citation>
    <scope>CHARACTERIZATION OF 3CL-PRO</scope>
    <scope>MUTAGENESIS OF HIS-3006; HIS-3028; ASN-3029; GLU-3074; THR-3099; CYS-3109; HIS-3127; HIS-3136 AND GLN-3267</scope>
</reference>
<reference key="4">
    <citation type="journal article" date="1999" name="J. Biol. Chem.">
        <title>A human RNA viral cysteine proteinase that depends upon a unique Zn2+-binding finger connecting the two domains of a papain-like fold.</title>
        <authorList>
            <person name="Herold J."/>
            <person name="Siddell S.G."/>
            <person name="Gorbalenya A.E."/>
        </authorList>
    </citation>
    <scope>ZINC-FINGER DOMAIN OF PL1-PRO</scope>
    <scope>MUTAGENESIS OF LYS-1048; GLY-1099; GLY-1102; CYS-1126; CYS-1128; CYS-1154; LEU-1155; CYS-1157; CYS-1163; VAL-1175; CYS-1203 AND ASP-1218</scope>
</reference>
<reference key="5">
    <citation type="journal article" date="1999" name="J. Biol. Chem.">
        <authorList>
            <person name="Herold J."/>
            <person name="Siddell S.G."/>
            <person name="Gorbalenya A.E."/>
        </authorList>
    </citation>
    <scope>ERRATUM OF PUBMED:10329692</scope>
</reference>
<reference key="6">
    <citation type="journal article" date="1999" name="J. Virol.">
        <title>Processing of the human coronavirus 229E replicase polyproteins by the virus-encoded 3C-like proteinase: identification of proteolytic products and cleavage sites common to pp1a and pp1ab.</title>
        <authorList>
            <person name="Ziebuhr J."/>
            <person name="Siddell S.G."/>
        </authorList>
    </citation>
    <scope>PROTEOLYTIC PROCESSING OF POLYPROTEIN</scope>
</reference>
<reference key="7">
    <citation type="journal article" date="2001" name="J. Biol. Chem.">
        <title>The autocatalytic release of a putative RNA virus transcription factor from its polyprotein precursor involves two paralogous papain-like proteases that cleave the same peptide bond.</title>
        <authorList>
            <person name="Ziebuhr J."/>
            <person name="Thiel V."/>
            <person name="Gorbalenya A.E."/>
        </authorList>
    </citation>
    <scope>PROTEOLYTIC PROCESSING OF POLYPROTEIN</scope>
    <scope>MUTAGENESIS OF CYS-1054 AND TRP-1702</scope>
</reference>
<reference key="8">
    <citation type="journal article" date="2002" name="J. Gen. Virol.">
        <title>Conservation of substrate specificities among coronavirus main proteases.</title>
        <authorList>
            <person name="Hegyi A."/>
            <person name="Ziebuhr J."/>
        </authorList>
    </citation>
    <scope>PROTEOLYTIC PROCESSING OF POLYPROTEIN</scope>
</reference>
<reference key="9">
    <citation type="journal article" date="2002" name="J. Gen. Virol.">
        <title>Mutational analysis of the active centre of coronavirus 3C-like proteases.</title>
        <authorList>
            <person name="Hegyi A."/>
            <person name="Friebe A."/>
            <person name="Gorbalenya A.E."/>
            <person name="Ziebuhr J."/>
        </authorList>
    </citation>
    <scope>MUTAGENESIS OF ASN-3029</scope>
</reference>
<reference key="10">
    <citation type="journal article" date="2003" name="Science">
        <title>Coronavirus main proteinase (3CLpro) structure: basis for design of anti-SARS drugs.</title>
        <authorList>
            <person name="Anand K."/>
            <person name="Ziebuhr J."/>
            <person name="Wadhwani P."/>
            <person name="Mesters J.R."/>
            <person name="Hilgenfeld R."/>
        </authorList>
    </citation>
    <scope>X-RAY CRYSTALLOGRAPHY (2.54 ANGSTROMS) OF 2966-3265</scope>
</reference>
<organism>
    <name type="scientific">Human coronavirus 229E</name>
    <name type="common">HCoV-229E</name>
    <dbReference type="NCBI Taxonomy" id="11137"/>
    <lineage>
        <taxon>Viruses</taxon>
        <taxon>Riboviria</taxon>
        <taxon>Orthornavirae</taxon>
        <taxon>Pisuviricota</taxon>
        <taxon>Pisoniviricetes</taxon>
        <taxon>Nidovirales</taxon>
        <taxon>Cornidovirineae</taxon>
        <taxon>Coronaviridae</taxon>
        <taxon>Orthocoronavirinae</taxon>
        <taxon>Alphacoronavirus</taxon>
        <taxon>Duvinacovirus</taxon>
    </lineage>
</organism>